<protein>
    <recommendedName>
        <fullName evidence="1">Protein-L-isoaspartate O-methyltransferase 1</fullName>
        <ecNumber evidence="1">2.1.1.77</ecNumber>
    </recommendedName>
    <alternativeName>
        <fullName evidence="1">L-isoaspartyl protein carboxyl methyltransferase 1</fullName>
    </alternativeName>
    <alternativeName>
        <fullName evidence="1">Protein L-isoaspartyl methyltransferase 1</fullName>
    </alternativeName>
    <alternativeName>
        <fullName evidence="1">Protein-beta-aspartate methyltransferase 1</fullName>
        <shortName evidence="1">PIMT 1</shortName>
    </alternativeName>
</protein>
<feature type="chain" id="PRO_0000351936" description="Protein-L-isoaspartate O-methyltransferase 1">
    <location>
        <begin position="1"/>
        <end position="211"/>
    </location>
</feature>
<feature type="active site" evidence="1">
    <location>
        <position position="62"/>
    </location>
</feature>
<sequence>MNGVATKSALNLARSLYEAGIKNEGVLKALADTPREMFLDAALGHKAYENTALPIGQGQTISQPYIVARMTELLLENAPKRVLEIGTGSGYQAAILAKLVPELCTVERIKSLQIQARLRLKRLDLHNISFKYGDGWKGWANKGPFDSIMVTAAASTIPEALLTQLADKGVLVIPVGDESQQLLKVVRHGDTFSSEVVEMVRFVPLVNGELA</sequence>
<keyword id="KW-0963">Cytoplasm</keyword>
<keyword id="KW-0489">Methyltransferase</keyword>
<keyword id="KW-1185">Reference proteome</keyword>
<keyword id="KW-0949">S-adenosyl-L-methionine</keyword>
<keyword id="KW-0808">Transferase</keyword>
<organism>
    <name type="scientific">Shewanella sediminis (strain HAW-EB3)</name>
    <dbReference type="NCBI Taxonomy" id="425104"/>
    <lineage>
        <taxon>Bacteria</taxon>
        <taxon>Pseudomonadati</taxon>
        <taxon>Pseudomonadota</taxon>
        <taxon>Gammaproteobacteria</taxon>
        <taxon>Alteromonadales</taxon>
        <taxon>Shewanellaceae</taxon>
        <taxon>Shewanella</taxon>
    </lineage>
</organism>
<reference key="1">
    <citation type="submission" date="2007-08" db="EMBL/GenBank/DDBJ databases">
        <title>Complete sequence of Shewanella sediminis HAW-EB3.</title>
        <authorList>
            <consortium name="US DOE Joint Genome Institute"/>
            <person name="Copeland A."/>
            <person name="Lucas S."/>
            <person name="Lapidus A."/>
            <person name="Barry K."/>
            <person name="Glavina del Rio T."/>
            <person name="Dalin E."/>
            <person name="Tice H."/>
            <person name="Pitluck S."/>
            <person name="Chertkov O."/>
            <person name="Brettin T."/>
            <person name="Bruce D."/>
            <person name="Detter J.C."/>
            <person name="Han C."/>
            <person name="Schmutz J."/>
            <person name="Larimer F."/>
            <person name="Land M."/>
            <person name="Hauser L."/>
            <person name="Kyrpides N."/>
            <person name="Kim E."/>
            <person name="Zhao J.-S."/>
            <person name="Richardson P."/>
        </authorList>
    </citation>
    <scope>NUCLEOTIDE SEQUENCE [LARGE SCALE GENOMIC DNA]</scope>
    <source>
        <strain>HAW-EB3</strain>
    </source>
</reference>
<comment type="function">
    <text evidence="1">Catalyzes the methyl esterification of L-isoaspartyl residues in peptides and proteins that result from spontaneous decomposition of normal L-aspartyl and L-asparaginyl residues. It plays a role in the repair and/or degradation of damaged proteins.</text>
</comment>
<comment type="catalytic activity">
    <reaction evidence="1">
        <text>[protein]-L-isoaspartate + S-adenosyl-L-methionine = [protein]-L-isoaspartate alpha-methyl ester + S-adenosyl-L-homocysteine</text>
        <dbReference type="Rhea" id="RHEA:12705"/>
        <dbReference type="Rhea" id="RHEA-COMP:12143"/>
        <dbReference type="Rhea" id="RHEA-COMP:12144"/>
        <dbReference type="ChEBI" id="CHEBI:57856"/>
        <dbReference type="ChEBI" id="CHEBI:59789"/>
        <dbReference type="ChEBI" id="CHEBI:90596"/>
        <dbReference type="ChEBI" id="CHEBI:90598"/>
        <dbReference type="EC" id="2.1.1.77"/>
    </reaction>
</comment>
<comment type="subcellular location">
    <subcellularLocation>
        <location evidence="1">Cytoplasm</location>
    </subcellularLocation>
</comment>
<comment type="similarity">
    <text evidence="1">Belongs to the methyltransferase superfamily. L-isoaspartyl/D-aspartyl protein methyltransferase family.</text>
</comment>
<proteinExistence type="inferred from homology"/>
<evidence type="ECO:0000255" key="1">
    <source>
        <dbReference type="HAMAP-Rule" id="MF_00090"/>
    </source>
</evidence>
<gene>
    <name evidence="1" type="primary">pcm1</name>
    <name type="ordered locus">Ssed_1296</name>
</gene>
<dbReference type="EC" id="2.1.1.77" evidence="1"/>
<dbReference type="EMBL" id="CP000821">
    <property type="protein sequence ID" value="ABV35907.1"/>
    <property type="molecule type" value="Genomic_DNA"/>
</dbReference>
<dbReference type="RefSeq" id="WP_012141643.1">
    <property type="nucleotide sequence ID" value="NC_009831.1"/>
</dbReference>
<dbReference type="SMR" id="A8FST4"/>
<dbReference type="STRING" id="425104.Ssed_1296"/>
<dbReference type="KEGG" id="sse:Ssed_1296"/>
<dbReference type="eggNOG" id="COG2518">
    <property type="taxonomic scope" value="Bacteria"/>
</dbReference>
<dbReference type="HOGENOM" id="CLU_055432_2_0_6"/>
<dbReference type="OrthoDB" id="9810066at2"/>
<dbReference type="Proteomes" id="UP000002015">
    <property type="component" value="Chromosome"/>
</dbReference>
<dbReference type="GO" id="GO:0005737">
    <property type="term" value="C:cytoplasm"/>
    <property type="evidence" value="ECO:0007669"/>
    <property type="project" value="UniProtKB-SubCell"/>
</dbReference>
<dbReference type="GO" id="GO:0004719">
    <property type="term" value="F:protein-L-isoaspartate (D-aspartate) O-methyltransferase activity"/>
    <property type="evidence" value="ECO:0007669"/>
    <property type="project" value="UniProtKB-UniRule"/>
</dbReference>
<dbReference type="GO" id="GO:0032259">
    <property type="term" value="P:methylation"/>
    <property type="evidence" value="ECO:0007669"/>
    <property type="project" value="UniProtKB-KW"/>
</dbReference>
<dbReference type="GO" id="GO:0036211">
    <property type="term" value="P:protein modification process"/>
    <property type="evidence" value="ECO:0007669"/>
    <property type="project" value="UniProtKB-UniRule"/>
</dbReference>
<dbReference type="GO" id="GO:0030091">
    <property type="term" value="P:protein repair"/>
    <property type="evidence" value="ECO:0007669"/>
    <property type="project" value="UniProtKB-UniRule"/>
</dbReference>
<dbReference type="CDD" id="cd02440">
    <property type="entry name" value="AdoMet_MTases"/>
    <property type="match status" value="1"/>
</dbReference>
<dbReference type="FunFam" id="3.40.50.150:FF:000010">
    <property type="entry name" value="Protein-L-isoaspartate O-methyltransferase"/>
    <property type="match status" value="1"/>
</dbReference>
<dbReference type="Gene3D" id="3.40.50.150">
    <property type="entry name" value="Vaccinia Virus protein VP39"/>
    <property type="match status" value="1"/>
</dbReference>
<dbReference type="HAMAP" id="MF_00090">
    <property type="entry name" value="PIMT"/>
    <property type="match status" value="1"/>
</dbReference>
<dbReference type="InterPro" id="IPR000682">
    <property type="entry name" value="PCMT"/>
</dbReference>
<dbReference type="InterPro" id="IPR029063">
    <property type="entry name" value="SAM-dependent_MTases_sf"/>
</dbReference>
<dbReference type="NCBIfam" id="TIGR00080">
    <property type="entry name" value="pimt"/>
    <property type="match status" value="1"/>
</dbReference>
<dbReference type="NCBIfam" id="NF001453">
    <property type="entry name" value="PRK00312.1"/>
    <property type="match status" value="1"/>
</dbReference>
<dbReference type="PANTHER" id="PTHR11579">
    <property type="entry name" value="PROTEIN-L-ISOASPARTATE O-METHYLTRANSFERASE"/>
    <property type="match status" value="1"/>
</dbReference>
<dbReference type="PANTHER" id="PTHR11579:SF0">
    <property type="entry name" value="PROTEIN-L-ISOASPARTATE(D-ASPARTATE) O-METHYLTRANSFERASE"/>
    <property type="match status" value="1"/>
</dbReference>
<dbReference type="Pfam" id="PF01135">
    <property type="entry name" value="PCMT"/>
    <property type="match status" value="1"/>
</dbReference>
<dbReference type="SUPFAM" id="SSF53335">
    <property type="entry name" value="S-adenosyl-L-methionine-dependent methyltransferases"/>
    <property type="match status" value="1"/>
</dbReference>
<dbReference type="PROSITE" id="PS01279">
    <property type="entry name" value="PCMT"/>
    <property type="match status" value="1"/>
</dbReference>
<accession>A8FST4</accession>
<name>PIMT1_SHESH</name>